<name>RBFA_SHEPA</name>
<evidence type="ECO:0000255" key="1">
    <source>
        <dbReference type="HAMAP-Rule" id="MF_00003"/>
    </source>
</evidence>
<evidence type="ECO:0000256" key="2">
    <source>
        <dbReference type="SAM" id="MobiDB-lite"/>
    </source>
</evidence>
<organism>
    <name type="scientific">Shewanella pealeana (strain ATCC 700345 / ANG-SQ1)</name>
    <dbReference type="NCBI Taxonomy" id="398579"/>
    <lineage>
        <taxon>Bacteria</taxon>
        <taxon>Pseudomonadati</taxon>
        <taxon>Pseudomonadota</taxon>
        <taxon>Gammaproteobacteria</taxon>
        <taxon>Alteromonadales</taxon>
        <taxon>Shewanellaceae</taxon>
        <taxon>Shewanella</taxon>
    </lineage>
</organism>
<feature type="chain" id="PRO_1000073780" description="Ribosome-binding factor A">
    <location>
        <begin position="1"/>
        <end position="142"/>
    </location>
</feature>
<feature type="region of interest" description="Disordered" evidence="2">
    <location>
        <begin position="119"/>
        <end position="142"/>
    </location>
</feature>
<protein>
    <recommendedName>
        <fullName evidence="1">Ribosome-binding factor A</fullName>
    </recommendedName>
</protein>
<sequence length="142" mass="16203">MAKEFSRTRRIAQQLQQELAQVLQRDMKDPRIGFVTVNDVDVSRDLSYAKVYVTFFEEDEKLVEQKVAALDAAAGYIRSLVAGRMKLRVMPELRFIYDSSLVEGMRMSNLVSRVISNDEAKQKQHGVETDAEQGDTKEEGDK</sequence>
<accession>A8H739</accession>
<gene>
    <name evidence="1" type="primary">rbfA</name>
    <name type="ordered locus">Spea_3059</name>
</gene>
<dbReference type="EMBL" id="CP000851">
    <property type="protein sequence ID" value="ABV88376.1"/>
    <property type="molecule type" value="Genomic_DNA"/>
</dbReference>
<dbReference type="RefSeq" id="WP_012156280.1">
    <property type="nucleotide sequence ID" value="NC_009901.1"/>
</dbReference>
<dbReference type="SMR" id="A8H739"/>
<dbReference type="STRING" id="398579.Spea_3059"/>
<dbReference type="KEGG" id="spl:Spea_3059"/>
<dbReference type="eggNOG" id="COG0858">
    <property type="taxonomic scope" value="Bacteria"/>
</dbReference>
<dbReference type="HOGENOM" id="CLU_089475_5_0_6"/>
<dbReference type="OrthoDB" id="307788at2"/>
<dbReference type="Proteomes" id="UP000002608">
    <property type="component" value="Chromosome"/>
</dbReference>
<dbReference type="GO" id="GO:0005829">
    <property type="term" value="C:cytosol"/>
    <property type="evidence" value="ECO:0007669"/>
    <property type="project" value="TreeGrafter"/>
</dbReference>
<dbReference type="GO" id="GO:0043024">
    <property type="term" value="F:ribosomal small subunit binding"/>
    <property type="evidence" value="ECO:0007669"/>
    <property type="project" value="TreeGrafter"/>
</dbReference>
<dbReference type="GO" id="GO:0030490">
    <property type="term" value="P:maturation of SSU-rRNA"/>
    <property type="evidence" value="ECO:0007669"/>
    <property type="project" value="UniProtKB-UniRule"/>
</dbReference>
<dbReference type="FunFam" id="3.30.300.20:FF:000007">
    <property type="entry name" value="Ribosome-binding factor A"/>
    <property type="match status" value="1"/>
</dbReference>
<dbReference type="Gene3D" id="3.30.300.20">
    <property type="match status" value="1"/>
</dbReference>
<dbReference type="HAMAP" id="MF_00003">
    <property type="entry name" value="RbfA"/>
    <property type="match status" value="1"/>
</dbReference>
<dbReference type="InterPro" id="IPR015946">
    <property type="entry name" value="KH_dom-like_a/b"/>
</dbReference>
<dbReference type="InterPro" id="IPR000238">
    <property type="entry name" value="RbfA"/>
</dbReference>
<dbReference type="InterPro" id="IPR023799">
    <property type="entry name" value="RbfA_dom_sf"/>
</dbReference>
<dbReference type="InterPro" id="IPR020053">
    <property type="entry name" value="Ribosome-bd_factorA_CS"/>
</dbReference>
<dbReference type="NCBIfam" id="TIGR00082">
    <property type="entry name" value="rbfA"/>
    <property type="match status" value="1"/>
</dbReference>
<dbReference type="PANTHER" id="PTHR33515">
    <property type="entry name" value="RIBOSOME-BINDING FACTOR A, CHLOROPLASTIC-RELATED"/>
    <property type="match status" value="1"/>
</dbReference>
<dbReference type="PANTHER" id="PTHR33515:SF1">
    <property type="entry name" value="RIBOSOME-BINDING FACTOR A, CHLOROPLASTIC-RELATED"/>
    <property type="match status" value="1"/>
</dbReference>
<dbReference type="Pfam" id="PF02033">
    <property type="entry name" value="RBFA"/>
    <property type="match status" value="1"/>
</dbReference>
<dbReference type="SUPFAM" id="SSF89919">
    <property type="entry name" value="Ribosome-binding factor A, RbfA"/>
    <property type="match status" value="1"/>
</dbReference>
<dbReference type="PROSITE" id="PS01319">
    <property type="entry name" value="RBFA"/>
    <property type="match status" value="1"/>
</dbReference>
<comment type="function">
    <text evidence="1">One of several proteins that assist in the late maturation steps of the functional core of the 30S ribosomal subunit. Associates with free 30S ribosomal subunits (but not with 30S subunits that are part of 70S ribosomes or polysomes). Required for efficient processing of 16S rRNA. May interact with the 5'-terminal helix region of 16S rRNA.</text>
</comment>
<comment type="subunit">
    <text evidence="1">Monomer. Binds 30S ribosomal subunits, but not 50S ribosomal subunits or 70S ribosomes.</text>
</comment>
<comment type="subcellular location">
    <subcellularLocation>
        <location evidence="1">Cytoplasm</location>
    </subcellularLocation>
</comment>
<comment type="similarity">
    <text evidence="1">Belongs to the RbfA family.</text>
</comment>
<reference key="1">
    <citation type="submission" date="2007-10" db="EMBL/GenBank/DDBJ databases">
        <title>Complete sequence of Shewanella pealeana ATCC 700345.</title>
        <authorList>
            <consortium name="US DOE Joint Genome Institute"/>
            <person name="Copeland A."/>
            <person name="Lucas S."/>
            <person name="Lapidus A."/>
            <person name="Barry K."/>
            <person name="Glavina del Rio T."/>
            <person name="Dalin E."/>
            <person name="Tice H."/>
            <person name="Pitluck S."/>
            <person name="Chertkov O."/>
            <person name="Brettin T."/>
            <person name="Bruce D."/>
            <person name="Detter J.C."/>
            <person name="Han C."/>
            <person name="Schmutz J."/>
            <person name="Larimer F."/>
            <person name="Land M."/>
            <person name="Hauser L."/>
            <person name="Kyrpides N."/>
            <person name="Kim E."/>
            <person name="Zhao J.-S.Z."/>
            <person name="Manno D."/>
            <person name="Hawari J."/>
            <person name="Richardson P."/>
        </authorList>
    </citation>
    <scope>NUCLEOTIDE SEQUENCE [LARGE SCALE GENOMIC DNA]</scope>
    <source>
        <strain>ATCC 700345 / ANG-SQ1</strain>
    </source>
</reference>
<keyword id="KW-0963">Cytoplasm</keyword>
<keyword id="KW-1185">Reference proteome</keyword>
<keyword id="KW-0690">Ribosome biogenesis</keyword>
<proteinExistence type="inferred from homology"/>